<comment type="subcellular location">
    <subcellularLocation>
        <location>Cell inner membrane</location>
        <topology>Multi-pass membrane protein</topology>
    </subcellularLocation>
</comment>
<comment type="similarity">
    <text evidence="2">Belongs to the sodium:galactoside symporter (TC 2.A.2) family.</text>
</comment>
<comment type="caution">
    <text evidence="2">The protein is inactive for transport, probably due to the presence of a Leu instead of a Pro at position 100.</text>
</comment>
<organism>
    <name type="scientific">Escherichia coli (strain K12)</name>
    <dbReference type="NCBI Taxonomy" id="83333"/>
    <lineage>
        <taxon>Bacteria</taxon>
        <taxon>Pseudomonadati</taxon>
        <taxon>Pseudomonadota</taxon>
        <taxon>Gammaproteobacteria</taxon>
        <taxon>Enterobacterales</taxon>
        <taxon>Enterobacteriaceae</taxon>
        <taxon>Escherichia</taxon>
    </lineage>
</organism>
<protein>
    <recommendedName>
        <fullName>Glucuronide carrier protein homolog</fullName>
    </recommendedName>
</protein>
<gene>
    <name type="primary">uidB</name>
    <name type="synonym">gusB</name>
    <name type="synonym">uidP</name>
    <name type="ordered locus">b1616</name>
    <name type="ordered locus">JW1608</name>
</gene>
<name>UIDB_ECOLI</name>
<feature type="chain" id="PRO_0000170762" description="Glucuronide carrier protein homolog">
    <location>
        <begin position="1"/>
        <end position="457"/>
    </location>
</feature>
<feature type="topological domain" description="Cytoplasmic" evidence="1">
    <location>
        <begin position="1"/>
        <end position="11"/>
    </location>
</feature>
<feature type="transmembrane region" description="Helical" evidence="1">
    <location>
        <begin position="12"/>
        <end position="34"/>
    </location>
</feature>
<feature type="topological domain" description="Periplasmic" evidence="1">
    <location>
        <begin position="35"/>
        <end position="37"/>
    </location>
</feature>
<feature type="transmembrane region" description="Helical" evidence="1">
    <location>
        <begin position="38"/>
        <end position="60"/>
    </location>
</feature>
<feature type="topological domain" description="Cytoplasmic" evidence="1">
    <location>
        <begin position="61"/>
        <end position="79"/>
    </location>
</feature>
<feature type="transmembrane region" description="Helical" evidence="1">
    <location>
        <begin position="80"/>
        <end position="100"/>
    </location>
</feature>
<feature type="topological domain" description="Periplasmic" evidence="1">
    <location>
        <begin position="101"/>
        <end position="108"/>
    </location>
</feature>
<feature type="transmembrane region" description="Helical" evidence="1">
    <location>
        <begin position="109"/>
        <end position="129"/>
    </location>
</feature>
<feature type="topological domain" description="Cytoplasmic" evidence="1">
    <location>
        <begin position="130"/>
        <end position="146"/>
    </location>
</feature>
<feature type="transmembrane region" description="Helical" evidence="1">
    <location>
        <begin position="147"/>
        <end position="167"/>
    </location>
</feature>
<feature type="topological domain" description="Periplasmic" evidence="1">
    <location>
        <begin position="168"/>
        <end position="180"/>
    </location>
</feature>
<feature type="transmembrane region" description="Helical" evidence="1">
    <location>
        <begin position="181"/>
        <end position="201"/>
    </location>
</feature>
<feature type="topological domain" description="Cytoplasmic" evidence="1">
    <location>
        <begin position="202"/>
        <end position="228"/>
    </location>
</feature>
<feature type="transmembrane region" description="Helical" evidence="1">
    <location>
        <begin position="229"/>
        <end position="249"/>
    </location>
</feature>
<feature type="topological domain" description="Periplasmic" evidence="1">
    <location>
        <begin position="250"/>
        <end position="263"/>
    </location>
</feature>
<feature type="transmembrane region" description="Helical" evidence="1">
    <location>
        <begin position="264"/>
        <end position="284"/>
    </location>
</feature>
<feature type="topological domain" description="Cytoplasmic" evidence="1">
    <location>
        <begin position="285"/>
        <end position="296"/>
    </location>
</feature>
<feature type="transmembrane region" description="Helical" evidence="1">
    <location>
        <begin position="297"/>
        <end position="316"/>
    </location>
</feature>
<feature type="topological domain" description="Periplasmic" evidence="1">
    <location>
        <begin position="317"/>
        <end position="320"/>
    </location>
</feature>
<feature type="transmembrane region" description="Helical" evidence="1">
    <location>
        <begin position="321"/>
        <end position="343"/>
    </location>
</feature>
<feature type="topological domain" description="Cytoplasmic" evidence="1">
    <location>
        <begin position="344"/>
        <end position="372"/>
    </location>
</feature>
<feature type="transmembrane region" description="Helical" evidence="1">
    <location>
        <begin position="373"/>
        <end position="393"/>
    </location>
</feature>
<feature type="topological domain" description="Periplasmic" evidence="1">
    <location>
        <begin position="394"/>
        <end position="408"/>
    </location>
</feature>
<feature type="transmembrane region" description="Helical" evidence="1">
    <location>
        <begin position="409"/>
        <end position="429"/>
    </location>
</feature>
<feature type="topological domain" description="Cytoplasmic" evidence="1">
    <location>
        <begin position="430"/>
        <end position="457"/>
    </location>
</feature>
<reference key="1">
    <citation type="journal article" date="1996" name="DNA Res.">
        <title>A 570-kb DNA sequence of the Escherichia coli K-12 genome corresponding to the 28.0-40.1 min region on the linkage map.</title>
        <authorList>
            <person name="Aiba H."/>
            <person name="Baba T."/>
            <person name="Fujita K."/>
            <person name="Hayashi K."/>
            <person name="Inada T."/>
            <person name="Isono K."/>
            <person name="Itoh T."/>
            <person name="Kasai H."/>
            <person name="Kashimoto K."/>
            <person name="Kimura S."/>
            <person name="Kitakawa M."/>
            <person name="Kitagawa M."/>
            <person name="Makino K."/>
            <person name="Miki T."/>
            <person name="Mizobuchi K."/>
            <person name="Mori H."/>
            <person name="Mori T."/>
            <person name="Motomura K."/>
            <person name="Nakade S."/>
            <person name="Nakamura Y."/>
            <person name="Nashimoto H."/>
            <person name="Nishio Y."/>
            <person name="Oshima T."/>
            <person name="Saito N."/>
            <person name="Sampei G."/>
            <person name="Seki Y."/>
            <person name="Sivasundaram S."/>
            <person name="Tagami H."/>
            <person name="Takeda J."/>
            <person name="Takemoto K."/>
            <person name="Takeuchi Y."/>
            <person name="Wada C."/>
            <person name="Yamamoto Y."/>
            <person name="Horiuchi T."/>
        </authorList>
    </citation>
    <scope>NUCLEOTIDE SEQUENCE [LARGE SCALE GENOMIC DNA]</scope>
    <source>
        <strain>K12 / W3110 / ATCC 27325 / DSM 5911</strain>
    </source>
</reference>
<reference key="2">
    <citation type="journal article" date="1997" name="Science">
        <title>The complete genome sequence of Escherichia coli K-12.</title>
        <authorList>
            <person name="Blattner F.R."/>
            <person name="Plunkett G. III"/>
            <person name="Bloch C.A."/>
            <person name="Perna N.T."/>
            <person name="Burland V."/>
            <person name="Riley M."/>
            <person name="Collado-Vides J."/>
            <person name="Glasner J.D."/>
            <person name="Rode C.K."/>
            <person name="Mayhew G.F."/>
            <person name="Gregor J."/>
            <person name="Davis N.W."/>
            <person name="Kirkpatrick H.A."/>
            <person name="Goeden M.A."/>
            <person name="Rose D.J."/>
            <person name="Mau B."/>
            <person name="Shao Y."/>
        </authorList>
    </citation>
    <scope>NUCLEOTIDE SEQUENCE [LARGE SCALE GENOMIC DNA]</scope>
    <source>
        <strain>K12 / MG1655 / ATCC 47076</strain>
    </source>
</reference>
<reference key="3">
    <citation type="journal article" date="2006" name="Mol. Syst. Biol.">
        <title>Highly accurate genome sequences of Escherichia coli K-12 strains MG1655 and W3110.</title>
        <authorList>
            <person name="Hayashi K."/>
            <person name="Morooka N."/>
            <person name="Yamamoto Y."/>
            <person name="Fujita K."/>
            <person name="Isono K."/>
            <person name="Choi S."/>
            <person name="Ohtsubo E."/>
            <person name="Baba T."/>
            <person name="Wanner B.L."/>
            <person name="Mori H."/>
            <person name="Horiuchi T."/>
        </authorList>
    </citation>
    <scope>NUCLEOTIDE SEQUENCE [LARGE SCALE GENOMIC DNA]</scope>
    <source>
        <strain>K12 / W3110 / ATCC 27325 / DSM 5911</strain>
    </source>
</reference>
<reference key="4">
    <citation type="journal article" date="2005" name="J. Bacteriol.">
        <title>The gusBC genes of Escherichia coli encode a glucuronide transport system.</title>
        <authorList>
            <person name="Liang W.-J."/>
            <person name="Wilson K.J."/>
            <person name="Xie H."/>
            <person name="Knol J."/>
            <person name="Suzuki S."/>
            <person name="Rutherford N.G."/>
            <person name="Henderson P.J.F."/>
            <person name="Jefferson R.A."/>
        </authorList>
    </citation>
    <scope>LACK OF TRANSPORT IN MG1655</scope>
    <source>
        <strain>K12 / MG1655 / ATCC 47076</strain>
    </source>
</reference>
<reference key="5">
    <citation type="journal article" date="2005" name="Science">
        <title>Global topology analysis of the Escherichia coli inner membrane proteome.</title>
        <authorList>
            <person name="Daley D.O."/>
            <person name="Rapp M."/>
            <person name="Granseth E."/>
            <person name="Melen K."/>
            <person name="Drew D."/>
            <person name="von Heijne G."/>
        </authorList>
    </citation>
    <scope>TOPOLOGY [LARGE SCALE ANALYSIS]</scope>
    <source>
        <strain>K12 / MG1655 / ATCC 47076</strain>
    </source>
</reference>
<accession>P0CE44</accession>
<accession>P30868</accession>
<accession>P77457</accession>
<proteinExistence type="evidence at protein level"/>
<dbReference type="EMBL" id="U00096">
    <property type="protein sequence ID" value="AAC74688.1"/>
    <property type="molecule type" value="Genomic_DNA"/>
</dbReference>
<dbReference type="EMBL" id="AP009048">
    <property type="protein sequence ID" value="BAA15367.1"/>
    <property type="molecule type" value="Genomic_DNA"/>
</dbReference>
<dbReference type="PIR" id="B64918">
    <property type="entry name" value="B64918"/>
</dbReference>
<dbReference type="RefSeq" id="NP_416133.1">
    <property type="nucleotide sequence ID" value="NC_000913.3"/>
</dbReference>
<dbReference type="RefSeq" id="WP_001075849.1">
    <property type="nucleotide sequence ID" value="NZ_LN832404.1"/>
</dbReference>
<dbReference type="SMR" id="P0CE44"/>
<dbReference type="BioGRID" id="4260252">
    <property type="interactions" value="11"/>
</dbReference>
<dbReference type="FunCoup" id="P0CE44">
    <property type="interactions" value="209"/>
</dbReference>
<dbReference type="STRING" id="511145.b1616"/>
<dbReference type="PaxDb" id="511145-b1616"/>
<dbReference type="EnsemblBacteria" id="AAC74688">
    <property type="protein sequence ID" value="AAC74688"/>
    <property type="gene ID" value="b1616"/>
</dbReference>
<dbReference type="GeneID" id="947484"/>
<dbReference type="KEGG" id="ecj:JW1608"/>
<dbReference type="KEGG" id="eco:b1616"/>
<dbReference type="KEGG" id="ecoc:C3026_09295"/>
<dbReference type="PATRIC" id="fig|1411691.4.peg.645"/>
<dbReference type="EchoBASE" id="EB1610"/>
<dbReference type="eggNOG" id="COG2211">
    <property type="taxonomic scope" value="Bacteria"/>
</dbReference>
<dbReference type="HOGENOM" id="CLU_027408_0_1_6"/>
<dbReference type="InParanoid" id="P0CE44"/>
<dbReference type="OMA" id="VGIYYVT"/>
<dbReference type="OrthoDB" id="181905at2"/>
<dbReference type="PhylomeDB" id="P0CE44"/>
<dbReference type="BioCyc" id="EcoCyc:UIDB-MONOMER"/>
<dbReference type="BioCyc" id="MetaCyc:UIDB-MONOMER"/>
<dbReference type="Proteomes" id="UP000000625">
    <property type="component" value="Chromosome"/>
</dbReference>
<dbReference type="GO" id="GO:0005886">
    <property type="term" value="C:plasma membrane"/>
    <property type="evidence" value="ECO:0000314"/>
    <property type="project" value="EcoCyc"/>
</dbReference>
<dbReference type="GO" id="GO:0015293">
    <property type="term" value="F:symporter activity"/>
    <property type="evidence" value="ECO:0007669"/>
    <property type="project" value="InterPro"/>
</dbReference>
<dbReference type="GO" id="GO:0008643">
    <property type="term" value="P:carbohydrate transport"/>
    <property type="evidence" value="ECO:0007669"/>
    <property type="project" value="InterPro"/>
</dbReference>
<dbReference type="GO" id="GO:0006814">
    <property type="term" value="P:sodium ion transport"/>
    <property type="evidence" value="ECO:0007669"/>
    <property type="project" value="InterPro"/>
</dbReference>
<dbReference type="GO" id="GO:0055085">
    <property type="term" value="P:transmembrane transport"/>
    <property type="evidence" value="ECO:0000318"/>
    <property type="project" value="GO_Central"/>
</dbReference>
<dbReference type="CDD" id="cd17332">
    <property type="entry name" value="MFS_MelB_like"/>
    <property type="match status" value="1"/>
</dbReference>
<dbReference type="FunFam" id="1.20.1250.20:FF:000309">
    <property type="entry name" value="Glucuronide carrier protein"/>
    <property type="match status" value="1"/>
</dbReference>
<dbReference type="Gene3D" id="1.20.1250.20">
    <property type="entry name" value="MFS general substrate transporter like domains"/>
    <property type="match status" value="2"/>
</dbReference>
<dbReference type="InterPro" id="IPR039672">
    <property type="entry name" value="MFS_2"/>
</dbReference>
<dbReference type="InterPro" id="IPR036259">
    <property type="entry name" value="MFS_trans_sf"/>
</dbReference>
<dbReference type="InterPro" id="IPR001927">
    <property type="entry name" value="Na/Gal_symport"/>
</dbReference>
<dbReference type="InterPro" id="IPR018043">
    <property type="entry name" value="Na/Gal_symport_CS"/>
</dbReference>
<dbReference type="NCBIfam" id="TIGR00792">
    <property type="entry name" value="gph"/>
    <property type="match status" value="1"/>
</dbReference>
<dbReference type="NCBIfam" id="NF007353">
    <property type="entry name" value="PRK09848.1"/>
    <property type="match status" value="1"/>
</dbReference>
<dbReference type="PANTHER" id="PTHR11328:SF39">
    <property type="entry name" value="2,3-DIHYDROXYPROPANE-1-SULFONATE EXPORTER-RELATED"/>
    <property type="match status" value="1"/>
</dbReference>
<dbReference type="PANTHER" id="PTHR11328">
    <property type="entry name" value="MAJOR FACILITATOR SUPERFAMILY DOMAIN-CONTAINING PROTEIN"/>
    <property type="match status" value="1"/>
</dbReference>
<dbReference type="Pfam" id="PF13347">
    <property type="entry name" value="MFS_2"/>
    <property type="match status" value="1"/>
</dbReference>
<dbReference type="SUPFAM" id="SSF103473">
    <property type="entry name" value="MFS general substrate transporter"/>
    <property type="match status" value="1"/>
</dbReference>
<dbReference type="PROSITE" id="PS00872">
    <property type="entry name" value="NA_GALACTOSIDE_SYMP"/>
    <property type="match status" value="1"/>
</dbReference>
<keyword id="KW-0997">Cell inner membrane</keyword>
<keyword id="KW-1003">Cell membrane</keyword>
<keyword id="KW-0472">Membrane</keyword>
<keyword id="KW-1185">Reference proteome</keyword>
<keyword id="KW-0812">Transmembrane</keyword>
<keyword id="KW-1133">Transmembrane helix</keyword>
<evidence type="ECO:0000255" key="1"/>
<evidence type="ECO:0000305" key="2"/>
<sequence>MNQQLSWRTIVGYSLGDVANNFAFAMGALFLLSYYTDVAGVGAAAAGTMLLLVRVFDAFADVFAGRVVDSVNTRWGKFRPFLLFGTAPLMIFSVLVFWVLTDWSHGSKVVYAYLTYMGLGLCYSLVNIPYGSLATAMTQQPQSRARLGAARGIAASLTFVCLAFLIGPSIKNSSPEEMVSVYHFWTIVLAIAGMVLYFICFKSTRENVVRIVAQPSLNISLQTLKRNRPLFMLCIGALCVLISTFAVSASSLFYVRYVLNDTGLFTVLVLVQNLVGTVASAPLVPGMVARIGKKNTFLIGALLGTCGYLLFFWVSVWSLPVALVALAIASIGQGVTMTVMWALEADTVEYGEYLTGVRIEGLTYSLFSFTRKCGQAIGGSIPAFILGLSGYIANQVQTPEVIMGIRTSIALVPCGFMLLAFVIIWFYPLTDKKFKEIVVEIDNRKKVQQQLISDITN</sequence>